<evidence type="ECO:0000250" key="1">
    <source>
        <dbReference type="UniProtKB" id="C7EXK4"/>
    </source>
</evidence>
<evidence type="ECO:0000250" key="2">
    <source>
        <dbReference type="UniProtKB" id="P04191"/>
    </source>
</evidence>
<evidence type="ECO:0000250" key="3">
    <source>
        <dbReference type="UniProtKB" id="P32660"/>
    </source>
</evidence>
<evidence type="ECO:0000250" key="4">
    <source>
        <dbReference type="UniProtKB" id="P39524"/>
    </source>
</evidence>
<evidence type="ECO:0000250" key="5">
    <source>
        <dbReference type="UniProtKB" id="Q8NB49"/>
    </source>
</evidence>
<evidence type="ECO:0000250" key="6">
    <source>
        <dbReference type="UniProtKB" id="Q9Y2Q0"/>
    </source>
</evidence>
<evidence type="ECO:0000255" key="7"/>
<evidence type="ECO:0000255" key="8">
    <source>
        <dbReference type="RuleBase" id="RU362033"/>
    </source>
</evidence>
<evidence type="ECO:0000256" key="9">
    <source>
        <dbReference type="SAM" id="MobiDB-lite"/>
    </source>
</evidence>
<evidence type="ECO:0000269" key="10">
    <source>
    </source>
</evidence>
<evidence type="ECO:0000303" key="11">
    <source>
    </source>
</evidence>
<evidence type="ECO:0000305" key="12"/>
<evidence type="ECO:0000305" key="13">
    <source>
    </source>
</evidence>
<evidence type="ECO:0000312" key="14">
    <source>
        <dbReference type="EMBL" id="EGS22806.1"/>
    </source>
</evidence>
<evidence type="ECO:0000312" key="15">
    <source>
        <dbReference type="Proteomes" id="UP000008066"/>
    </source>
</evidence>
<evidence type="ECO:0007744" key="16">
    <source>
        <dbReference type="PDB" id="6LCP"/>
    </source>
</evidence>
<evidence type="ECO:0007744" key="17">
    <source>
        <dbReference type="PDB" id="6LCR"/>
    </source>
</evidence>
<evidence type="ECO:0007829" key="18">
    <source>
        <dbReference type="PDB" id="6LCP"/>
    </source>
</evidence>
<evidence type="ECO:0007829" key="19">
    <source>
        <dbReference type="PDB" id="6LCR"/>
    </source>
</evidence>
<accession>G0S196</accession>
<sequence>MAPPQEEGGGNGTELSMQRSRWATRRLTVKSGARKRLSLMTRAQAKNSATEKRQSGVTDDGSPAADGDQKEGSISSSNNGGSAPRKLYFNLPLPPELKDEEGHPIQQFPRNKIRTAKYTPLSFIPKNLWFQFHNIANIFFLFLVILVIFPIFGGVNPGLNSVPLIVIITVTAIKDAIEDYRRTILDIELNNAPVHRLQGWENVNVEKDNVSLWRRFKKANSRFFGSIWHLIERLWKEDAQSMRQRFASADPRMSIETRTAPWDPSHRRSVASHTEEIQMTPVPSPVPHDPDVPTVSSAIENEATLLQNLKGDLINHEIPVSGKARFHKDAWKNLVVGDFVRIYNDDELPADIIILATSDPDGACYVETKNLDGETNLKVRQALRCGRTLKHARDCERAQFVIESEPPQPNLYKYNGAIRWKQRVPWDPHGEPREMSEPIGIDNLLLRGCHLRNTEWALGVVVFTGHDTKIMMNAGITPSKRARIARELNFNVICNFGILLIMCLIAAIANGIAWGKTDASLAWFEYGSIGGTPALTGFITFWAAVIVFQNLVPISLYISLEIVRTLQAFFIYSDVGMYYEKIDQPCIPKSWNISDDVGQIEYIFSDKTGTLTQNVMEFKKATINGQPYGEAYTEAQAGMDRRRGINVEEEAKVIREEIAAAKVRAIRGLRELHDNPYLHDEDMTFIAPDFVEDLAGKNGPEQQQATEHFMLALALCHTVVAEKQPGDPPKMIFKAQSPDEAALVATARDMGFTVLGMSDGGINVNVMGKDMHFPVLSIIEFNSSRKRMSTIVRMPDGRILLFCKGADSVIYSRLKKGEQADMRRETAQHLEMFAVEGLRTLCIAERELSEEEYREWRREHDLAATALENREEKLEEVADKIERDLTLLGGTAIEDRLQDGVPDTIALLADAGIKLWVLTGDKVETAINIGFSCNLLNNDMDLLRLQVNESDASTEDDYLQLAEEQLKTNLERFNMTGDDEELKRARKDHNAPSPTYALVIDGFTLRWVLSDSLKQKFLLLCKQCKSVLCCRVSPAQKAAVVSMVKNGLDVMTLSIGDGANDVAMIQEADVGVGIAGEEGRQAVMSSDFAIGQFRFLQRLVLVHGRWSYRRLAETISNFFYKNMIWTWSIFWYQCYCNFDIAYIFEYTYILMFNLFFTSVPVILMGVLDQDVSDTVSLAVPQLYRRGIERKEWTQTKFWLYMIDGVYQSVMSFFIPFIFVVLTPTAAGNGLDVSERTRLGAYIAHPAVITINGYILINTYRWDWLMLLSIVLSDVFIFFWTGVYTATTYSAGFYQAAPQVYQELTFWMCLIVTPALCLLPRLVVKCIQKQRFPYDVDIIREQANRGDFAAADAAAVAALGGPERVEGESLGSLSSSGKGSGRSKKSKHQQYASVDEDRRPIYPPSIATHNTRAQNGSDGTTYIMQSRTSTELQQEMPFDRDREEETPAVRPSIERTRPSYDRIRRSIDRVRPSFEASNDFTSAARLSRIESTHSSLGHTYSHQRESYAGESSGAQQGQEPGQRRFNLATVRKRGLSAFSKKSIDTTEGEPPREPPM</sequence>
<comment type="function">
    <text evidence="3 10">Catalytic component of a P4-ATPase flippase complex which catalyzes the hydrolysis of ATP coupled to the transport of phosphatidylcholine and phosphatidylserine from the lumenal to the cytosolic leaflet of membranes and ensures the maintenance of asymmetric distribution of phospholipids (PubMed:32303992). May also transport glucosylceramide and phosphatidylethanolamine (By similarity).</text>
</comment>
<comment type="catalytic activity">
    <reaction evidence="13">
        <text>ATP + H2O + phospholipidSide 1 = ADP + phosphate + phospholipidSide 2.</text>
        <dbReference type="EC" id="7.6.2.1"/>
    </reaction>
</comment>
<comment type="catalytic activity">
    <reaction evidence="3">
        <text>a 1,2-diacyl-sn-glycero-3-phosphoethanolamine(out) + ATP + H2O = a 1,2-diacyl-sn-glycero-3-phosphoethanolamine(in) + ADP + phosphate + H(+)</text>
        <dbReference type="Rhea" id="RHEA:66132"/>
        <dbReference type="ChEBI" id="CHEBI:15377"/>
        <dbReference type="ChEBI" id="CHEBI:15378"/>
        <dbReference type="ChEBI" id="CHEBI:30616"/>
        <dbReference type="ChEBI" id="CHEBI:43474"/>
        <dbReference type="ChEBI" id="CHEBI:64612"/>
        <dbReference type="ChEBI" id="CHEBI:456216"/>
    </reaction>
    <physiologicalReaction direction="left-to-right" evidence="3">
        <dbReference type="Rhea" id="RHEA:66133"/>
    </physiologicalReaction>
</comment>
<comment type="catalytic activity">
    <reaction evidence="13">
        <text>a 1,2-diacyl-sn-glycero-3-phosphocholine(out) + ATP + H2O = a 1,2-diacyl-sn-glycero-3-phosphocholine(in) + ADP + phosphate + H(+)</text>
        <dbReference type="Rhea" id="RHEA:38583"/>
        <dbReference type="ChEBI" id="CHEBI:15377"/>
        <dbReference type="ChEBI" id="CHEBI:15378"/>
        <dbReference type="ChEBI" id="CHEBI:30616"/>
        <dbReference type="ChEBI" id="CHEBI:43474"/>
        <dbReference type="ChEBI" id="CHEBI:57643"/>
        <dbReference type="ChEBI" id="CHEBI:456216"/>
    </reaction>
    <physiologicalReaction direction="left-to-right" evidence="13">
        <dbReference type="Rhea" id="RHEA:38584"/>
    </physiologicalReaction>
</comment>
<comment type="catalytic activity">
    <reaction evidence="3">
        <text>a beta-D-glucosyl-(1&lt;-&gt;1')-N-acylsphing-4-enine(out) + ATP + H2O = a beta-D-glucosyl-(1&lt;-&gt;1')-N-acylsphing-4-enine(in) + ADP + phosphate + H(+)</text>
        <dbReference type="Rhea" id="RHEA:66036"/>
        <dbReference type="ChEBI" id="CHEBI:15377"/>
        <dbReference type="ChEBI" id="CHEBI:15378"/>
        <dbReference type="ChEBI" id="CHEBI:22801"/>
        <dbReference type="ChEBI" id="CHEBI:30616"/>
        <dbReference type="ChEBI" id="CHEBI:43474"/>
        <dbReference type="ChEBI" id="CHEBI:456216"/>
    </reaction>
    <physiologicalReaction direction="left-to-right" evidence="3">
        <dbReference type="Rhea" id="RHEA:66037"/>
    </physiologicalReaction>
</comment>
<comment type="catalytic activity">
    <reaction evidence="13">
        <text>a 1,2-diacyl-sn-glycero-3-phospho-L-serine(out) + ATP + H2O = a 1,2-diacyl-sn-glycero-3-phospho-L-serine(in) + ADP + phosphate + H(+)</text>
        <dbReference type="Rhea" id="RHEA:38567"/>
        <dbReference type="ChEBI" id="CHEBI:15377"/>
        <dbReference type="ChEBI" id="CHEBI:15378"/>
        <dbReference type="ChEBI" id="CHEBI:30616"/>
        <dbReference type="ChEBI" id="CHEBI:43474"/>
        <dbReference type="ChEBI" id="CHEBI:57262"/>
        <dbReference type="ChEBI" id="CHEBI:456216"/>
    </reaction>
    <physiologicalReaction direction="left-to-right" evidence="13">
        <dbReference type="Rhea" id="RHEA:38568"/>
    </physiologicalReaction>
</comment>
<comment type="cofactor">
    <cofactor evidence="10">
        <name>Mg(2+)</name>
        <dbReference type="ChEBI" id="CHEBI:18420"/>
    </cofactor>
</comment>
<comment type="subunit">
    <text evidence="10">Component of a flippase complex consisting of DNF1 and CDC50 (PubMed:32303992). Interacts with CDC50; the interaction is direct (PubMed:32303992).</text>
</comment>
<comment type="subcellular location">
    <subcellularLocation>
        <location evidence="3">Cell membrane</location>
        <topology evidence="3">Multi-pass membrane protein</topology>
    </subcellularLocation>
    <subcellularLocation>
        <location evidence="3">Endosome membrane</location>
        <topology evidence="3">Multi-pass membrane protein</topology>
    </subcellularLocation>
    <subcellularLocation>
        <location evidence="3">Golgi apparatus</location>
        <location evidence="3">trans-Golgi network membrane</location>
        <topology evidence="3">Multi-pass membrane protein</topology>
    </subcellularLocation>
</comment>
<comment type="similarity">
    <text evidence="8">Belongs to the cation transport ATPase (P-type) (TC 3.A.3) family. Type IV subfamily.</text>
</comment>
<reference evidence="15" key="1">
    <citation type="journal article" date="2011" name="Cell">
        <title>Insight into structure and assembly of the nuclear pore complex by utilizing the genome of a eukaryotic thermophile.</title>
        <authorList>
            <person name="Amlacher S."/>
            <person name="Sarges P."/>
            <person name="Flemming D."/>
            <person name="van Noort V."/>
            <person name="Kunze R."/>
            <person name="Devos D.P."/>
            <person name="Arumugam M."/>
            <person name="Bork P."/>
            <person name="Hurt E."/>
        </authorList>
    </citation>
    <scope>NUCLEOTIDE SEQUENCE [LARGE SCALE GENOMIC DNA]</scope>
    <source>
        <strain evidence="15">DSM 1495 / CBS 144.50 / IMI 039719</strain>
    </source>
</reference>
<reference evidence="16 17" key="2">
    <citation type="journal article" date="2020" name="Protein Cell">
        <title>Structures of a P4-ATPase lipid flippase in lipid bilayers.</title>
        <authorList>
            <person name="He Y."/>
            <person name="Xu J."/>
            <person name="Wu X."/>
            <person name="Li L."/>
        </authorList>
    </citation>
    <scope>STRUCTURE BY ELECTRON MICROSCOPY (3.40 ANGSTROMS) IN COMPLEX WITH CDC50; PHOSPHOLIPID AND MAGNESIUM</scope>
    <scope>FUNCTION</scope>
    <scope>CATALYTIC ACTIVITY</scope>
    <scope>COFACTOR</scope>
    <scope>IDENTIFICATION IN A COMPLEX WITH CDC50</scope>
    <scope>INTERACTION WITH CDC50</scope>
    <scope>1,2-DIACYL-SN-GLYCERO-3-PHOSPHO-L-SERINE BINDING</scope>
</reference>
<gene>
    <name evidence="11" type="primary">DNF1</name>
    <name evidence="14" type="ORF">CTHT_0012810</name>
</gene>
<name>ATC5_CHATD</name>
<dbReference type="EC" id="7.6.2.1" evidence="13"/>
<dbReference type="EMBL" id="GL988039">
    <property type="protein sequence ID" value="EGS22806.1"/>
    <property type="molecule type" value="Genomic_DNA"/>
</dbReference>
<dbReference type="RefSeq" id="XP_006691798.1">
    <property type="nucleotide sequence ID" value="XM_006691735.1"/>
</dbReference>
<dbReference type="PDB" id="6LCP">
    <property type="method" value="EM"/>
    <property type="resolution" value="3.48 A"/>
    <property type="chains" value="A=1-1555"/>
</dbReference>
<dbReference type="PDB" id="6LCR">
    <property type="method" value="EM"/>
    <property type="resolution" value="3.40 A"/>
    <property type="chains" value="A=1-1555"/>
</dbReference>
<dbReference type="PDBsum" id="6LCP"/>
<dbReference type="PDBsum" id="6LCR"/>
<dbReference type="EMDB" id="EMD-0872"/>
<dbReference type="EMDB" id="EMD-0873"/>
<dbReference type="SMR" id="G0S196"/>
<dbReference type="STRING" id="759272.G0S196"/>
<dbReference type="GeneID" id="18255319"/>
<dbReference type="KEGG" id="cthr:CTHT_0012810"/>
<dbReference type="eggNOG" id="KOG0206">
    <property type="taxonomic scope" value="Eukaryota"/>
</dbReference>
<dbReference type="HOGENOM" id="CLU_000846_0_0_1"/>
<dbReference type="OMA" id="QALRCGR"/>
<dbReference type="OrthoDB" id="377733at2759"/>
<dbReference type="Proteomes" id="UP000008066">
    <property type="component" value="Unassembled WGS sequence"/>
</dbReference>
<dbReference type="GO" id="GO:0010008">
    <property type="term" value="C:endosome membrane"/>
    <property type="evidence" value="ECO:0007669"/>
    <property type="project" value="UniProtKB-SubCell"/>
</dbReference>
<dbReference type="GO" id="GO:0005794">
    <property type="term" value="C:Golgi apparatus"/>
    <property type="evidence" value="ECO:0007669"/>
    <property type="project" value="UniProtKB-SubCell"/>
</dbReference>
<dbReference type="GO" id="GO:0005886">
    <property type="term" value="C:plasma membrane"/>
    <property type="evidence" value="ECO:0007669"/>
    <property type="project" value="UniProtKB-SubCell"/>
</dbReference>
<dbReference type="GO" id="GO:0005524">
    <property type="term" value="F:ATP binding"/>
    <property type="evidence" value="ECO:0007669"/>
    <property type="project" value="UniProtKB-KW"/>
</dbReference>
<dbReference type="GO" id="GO:0016887">
    <property type="term" value="F:ATP hydrolysis activity"/>
    <property type="evidence" value="ECO:0007669"/>
    <property type="project" value="InterPro"/>
</dbReference>
<dbReference type="GO" id="GO:0000287">
    <property type="term" value="F:magnesium ion binding"/>
    <property type="evidence" value="ECO:0007669"/>
    <property type="project" value="InterPro"/>
</dbReference>
<dbReference type="GO" id="GO:0090554">
    <property type="term" value="F:phosphatidylcholine floppase activity"/>
    <property type="evidence" value="ECO:0007669"/>
    <property type="project" value="RHEA"/>
</dbReference>
<dbReference type="GO" id="GO:0090556">
    <property type="term" value="F:phosphatidylserine floppase activity"/>
    <property type="evidence" value="ECO:0007669"/>
    <property type="project" value="RHEA"/>
</dbReference>
<dbReference type="GO" id="GO:0045332">
    <property type="term" value="P:phospholipid translocation"/>
    <property type="evidence" value="ECO:0007669"/>
    <property type="project" value="TreeGrafter"/>
</dbReference>
<dbReference type="CDD" id="cd02073">
    <property type="entry name" value="P-type_ATPase_APLT_Dnf-like"/>
    <property type="match status" value="1"/>
</dbReference>
<dbReference type="FunFam" id="3.40.1110.10:FF:000048">
    <property type="entry name" value="Phospholipid-transporting ATPase"/>
    <property type="match status" value="1"/>
</dbReference>
<dbReference type="FunFam" id="3.40.50.1000:FF:000108">
    <property type="entry name" value="Phospholipid-transporting ATPase"/>
    <property type="match status" value="1"/>
</dbReference>
<dbReference type="FunFam" id="3.40.50.1000:FF:000001">
    <property type="entry name" value="Phospholipid-transporting ATPase IC"/>
    <property type="match status" value="1"/>
</dbReference>
<dbReference type="Gene3D" id="3.40.1110.10">
    <property type="entry name" value="Calcium-transporting ATPase, cytoplasmic domain N"/>
    <property type="match status" value="1"/>
</dbReference>
<dbReference type="Gene3D" id="2.70.150.10">
    <property type="entry name" value="Calcium-transporting ATPase, cytoplasmic transduction domain A"/>
    <property type="match status" value="1"/>
</dbReference>
<dbReference type="Gene3D" id="3.40.50.1000">
    <property type="entry name" value="HAD superfamily/HAD-like"/>
    <property type="match status" value="1"/>
</dbReference>
<dbReference type="InterPro" id="IPR023299">
    <property type="entry name" value="ATPase_P-typ_cyto_dom_N"/>
</dbReference>
<dbReference type="InterPro" id="IPR018303">
    <property type="entry name" value="ATPase_P-typ_P_site"/>
</dbReference>
<dbReference type="InterPro" id="IPR023298">
    <property type="entry name" value="ATPase_P-typ_TM_dom_sf"/>
</dbReference>
<dbReference type="InterPro" id="IPR008250">
    <property type="entry name" value="ATPase_P-typ_transduc_dom_A_sf"/>
</dbReference>
<dbReference type="InterPro" id="IPR036412">
    <property type="entry name" value="HAD-like_sf"/>
</dbReference>
<dbReference type="InterPro" id="IPR023214">
    <property type="entry name" value="HAD_sf"/>
</dbReference>
<dbReference type="InterPro" id="IPR006539">
    <property type="entry name" value="P-type_ATPase_IV"/>
</dbReference>
<dbReference type="InterPro" id="IPR032631">
    <property type="entry name" value="P-type_ATPase_N"/>
</dbReference>
<dbReference type="InterPro" id="IPR001757">
    <property type="entry name" value="P_typ_ATPase"/>
</dbReference>
<dbReference type="InterPro" id="IPR032630">
    <property type="entry name" value="P_typ_ATPase_c"/>
</dbReference>
<dbReference type="InterPro" id="IPR044492">
    <property type="entry name" value="P_typ_ATPase_HD_dom"/>
</dbReference>
<dbReference type="NCBIfam" id="TIGR01652">
    <property type="entry name" value="ATPase-Plipid"/>
    <property type="match status" value="1"/>
</dbReference>
<dbReference type="NCBIfam" id="TIGR01494">
    <property type="entry name" value="ATPase_P-type"/>
    <property type="match status" value="1"/>
</dbReference>
<dbReference type="PANTHER" id="PTHR24092:SF180">
    <property type="entry name" value="PHOSPHOLIPID-TRANSPORTING ATPASE DNF1-RELATED"/>
    <property type="match status" value="1"/>
</dbReference>
<dbReference type="PANTHER" id="PTHR24092">
    <property type="entry name" value="PROBABLE PHOSPHOLIPID-TRANSPORTING ATPASE"/>
    <property type="match status" value="1"/>
</dbReference>
<dbReference type="Pfam" id="PF13246">
    <property type="entry name" value="Cation_ATPase"/>
    <property type="match status" value="1"/>
</dbReference>
<dbReference type="Pfam" id="PF16212">
    <property type="entry name" value="PhoLip_ATPase_C"/>
    <property type="match status" value="1"/>
</dbReference>
<dbReference type="Pfam" id="PF16209">
    <property type="entry name" value="PhoLip_ATPase_N"/>
    <property type="match status" value="1"/>
</dbReference>
<dbReference type="PRINTS" id="PR00119">
    <property type="entry name" value="CATATPASE"/>
</dbReference>
<dbReference type="SFLD" id="SFLDS00003">
    <property type="entry name" value="Haloacid_Dehalogenase"/>
    <property type="match status" value="1"/>
</dbReference>
<dbReference type="SFLD" id="SFLDF00027">
    <property type="entry name" value="p-type_atpase"/>
    <property type="match status" value="1"/>
</dbReference>
<dbReference type="SUPFAM" id="SSF81653">
    <property type="entry name" value="Calcium ATPase, transduction domain A"/>
    <property type="match status" value="1"/>
</dbReference>
<dbReference type="SUPFAM" id="SSF81665">
    <property type="entry name" value="Calcium ATPase, transmembrane domain M"/>
    <property type="match status" value="1"/>
</dbReference>
<dbReference type="SUPFAM" id="SSF56784">
    <property type="entry name" value="HAD-like"/>
    <property type="match status" value="1"/>
</dbReference>
<dbReference type="SUPFAM" id="SSF81660">
    <property type="entry name" value="Metal cation-transporting ATPase, ATP-binding domain N"/>
    <property type="match status" value="1"/>
</dbReference>
<dbReference type="PROSITE" id="PS00154">
    <property type="entry name" value="ATPASE_E1_E2"/>
    <property type="match status" value="11320"/>
</dbReference>
<organism evidence="15">
    <name type="scientific">Chaetomium thermophilum (strain DSM 1495 / CBS 144.50 / IMI 039719)</name>
    <name type="common">Thermochaetoides thermophila</name>
    <dbReference type="NCBI Taxonomy" id="759272"/>
    <lineage>
        <taxon>Eukaryota</taxon>
        <taxon>Fungi</taxon>
        <taxon>Dikarya</taxon>
        <taxon>Ascomycota</taxon>
        <taxon>Pezizomycotina</taxon>
        <taxon>Sordariomycetes</taxon>
        <taxon>Sordariomycetidae</taxon>
        <taxon>Sordariales</taxon>
        <taxon>Chaetomiaceae</taxon>
        <taxon>Thermochaetoides</taxon>
    </lineage>
</organism>
<proteinExistence type="evidence at protein level"/>
<keyword id="KW-0002">3D-structure</keyword>
<keyword id="KW-0067">ATP-binding</keyword>
<keyword id="KW-1003">Cell membrane</keyword>
<keyword id="KW-0967">Endosome</keyword>
<keyword id="KW-0333">Golgi apparatus</keyword>
<keyword id="KW-0445">Lipid transport</keyword>
<keyword id="KW-0460">Magnesium</keyword>
<keyword id="KW-0472">Membrane</keyword>
<keyword id="KW-0479">Metal-binding</keyword>
<keyword id="KW-0547">Nucleotide-binding</keyword>
<keyword id="KW-1185">Reference proteome</keyword>
<keyword id="KW-1278">Translocase</keyword>
<keyword id="KW-0812">Transmembrane</keyword>
<keyword id="KW-1133">Transmembrane helix</keyword>
<keyword id="KW-0813">Transport</keyword>
<feature type="chain" id="PRO_0000458217" description="Phospholipid-transporting ATPase DNF1">
    <location>
        <begin position="1"/>
        <end position="1555"/>
    </location>
</feature>
<feature type="topological domain" description="Cytoplasmic" evidence="12">
    <location>
        <begin position="1"/>
        <end position="134"/>
    </location>
</feature>
<feature type="transmembrane region" description="Helical" evidence="7">
    <location>
        <begin position="135"/>
        <end position="155"/>
    </location>
</feature>
<feature type="topological domain" description="Extracellular" evidence="12">
    <location>
        <position position="156"/>
    </location>
</feature>
<feature type="transmembrane region" description="Helical" evidence="7">
    <location>
        <begin position="157"/>
        <end position="177"/>
    </location>
</feature>
<feature type="topological domain" description="Cytoplasmic" evidence="12">
    <location>
        <begin position="178"/>
        <end position="491"/>
    </location>
</feature>
<feature type="transmembrane region" description="Helical" evidence="7">
    <location>
        <begin position="492"/>
        <end position="512"/>
    </location>
</feature>
<feature type="topological domain" description="Extracellular" evidence="12">
    <location>
        <begin position="513"/>
        <end position="537"/>
    </location>
</feature>
<feature type="transmembrane region" description="Helical" evidence="7">
    <location>
        <begin position="538"/>
        <end position="558"/>
    </location>
</feature>
<feature type="topological domain" description="Cytoplasmic" evidence="12">
    <location>
        <begin position="559"/>
        <end position="1123"/>
    </location>
</feature>
<feature type="transmembrane region" description="Helical" evidence="7">
    <location>
        <begin position="1124"/>
        <end position="1144"/>
    </location>
</feature>
<feature type="topological domain" description="Extracellular" evidence="12">
    <location>
        <begin position="1145"/>
        <end position="1146"/>
    </location>
</feature>
<feature type="transmembrane region" description="Helical" evidence="7">
    <location>
        <begin position="1147"/>
        <end position="1167"/>
    </location>
</feature>
<feature type="topological domain" description="Cytoplasmic" evidence="12">
    <location>
        <begin position="1168"/>
        <end position="1200"/>
    </location>
</feature>
<feature type="transmembrane region" description="Helical" evidence="7">
    <location>
        <begin position="1201"/>
        <end position="1221"/>
    </location>
</feature>
<feature type="topological domain" description="Extracellular" evidence="12">
    <location>
        <begin position="1222"/>
        <end position="1237"/>
    </location>
</feature>
<feature type="transmembrane region" description="Helical" evidence="7">
    <location>
        <begin position="1238"/>
        <end position="1258"/>
    </location>
</feature>
<feature type="topological domain" description="Cytoplasmic" evidence="12">
    <location>
        <begin position="1259"/>
        <end position="1262"/>
    </location>
</feature>
<feature type="transmembrane region" description="Helical" evidence="7">
    <location>
        <begin position="1263"/>
        <end position="1283"/>
    </location>
</feature>
<feature type="topological domain" description="Extracellular" evidence="12">
    <location>
        <begin position="1284"/>
        <end position="1302"/>
    </location>
</feature>
<feature type="transmembrane region" description="Helical" evidence="7">
    <location>
        <begin position="1303"/>
        <end position="1323"/>
    </location>
</feature>
<feature type="topological domain" description="Cytoplasmic" evidence="12">
    <location>
        <begin position="1324"/>
        <end position="1555"/>
    </location>
</feature>
<feature type="region of interest" description="Disordered" evidence="9">
    <location>
        <begin position="1"/>
        <end position="85"/>
    </location>
</feature>
<feature type="region of interest" description="Disordered" evidence="9">
    <location>
        <begin position="257"/>
        <end position="288"/>
    </location>
</feature>
<feature type="region of interest" description="Disordered" evidence="9">
    <location>
        <begin position="1364"/>
        <end position="1456"/>
    </location>
</feature>
<feature type="region of interest" description="Disordered" evidence="9">
    <location>
        <begin position="1489"/>
        <end position="1555"/>
    </location>
</feature>
<feature type="compositionally biased region" description="Basic residues" evidence="9">
    <location>
        <begin position="22"/>
        <end position="37"/>
    </location>
</feature>
<feature type="compositionally biased region" description="Low complexity" evidence="9">
    <location>
        <begin position="72"/>
        <end position="82"/>
    </location>
</feature>
<feature type="compositionally biased region" description="Polar residues" evidence="9">
    <location>
        <begin position="1406"/>
        <end position="1432"/>
    </location>
</feature>
<feature type="compositionally biased region" description="Basic and acidic residues" evidence="9">
    <location>
        <begin position="1436"/>
        <end position="1456"/>
    </location>
</feature>
<feature type="compositionally biased region" description="Basic and acidic residues" evidence="9">
    <location>
        <begin position="1540"/>
        <end position="1555"/>
    </location>
</feature>
<feature type="active site" description="4-aspartylphosphate intermediate" evidence="6">
    <location>
        <position position="606"/>
    </location>
</feature>
<feature type="binding site" evidence="3">
    <location>
        <position position="606"/>
    </location>
    <ligand>
        <name>ATP</name>
        <dbReference type="ChEBI" id="CHEBI:30616"/>
    </ligand>
</feature>
<feature type="binding site" evidence="6">
    <location>
        <position position="606"/>
    </location>
    <ligand>
        <name>Mg(2+)</name>
        <dbReference type="ChEBI" id="CHEBI:18420"/>
    </ligand>
</feature>
<feature type="binding site" evidence="3">
    <location>
        <position position="607"/>
    </location>
    <ligand>
        <name>ATP</name>
        <dbReference type="ChEBI" id="CHEBI:30616"/>
    </ligand>
</feature>
<feature type="binding site" evidence="3">
    <location>
        <position position="608"/>
    </location>
    <ligand>
        <name>ATP</name>
        <dbReference type="ChEBI" id="CHEBI:30616"/>
    </ligand>
</feature>
<feature type="binding site" evidence="6">
    <location>
        <position position="608"/>
    </location>
    <ligand>
        <name>Mg(2+)</name>
        <dbReference type="ChEBI" id="CHEBI:18420"/>
    </ligand>
</feature>
<feature type="binding site" evidence="3">
    <location>
        <position position="740"/>
    </location>
    <ligand>
        <name>ATP</name>
        <dbReference type="ChEBI" id="CHEBI:30616"/>
    </ligand>
</feature>
<feature type="binding site" evidence="6">
    <location>
        <position position="781"/>
    </location>
    <ligand>
        <name>ATP</name>
        <dbReference type="ChEBI" id="CHEBI:30616"/>
    </ligand>
</feature>
<feature type="binding site" evidence="3">
    <location>
        <position position="783"/>
    </location>
    <ligand>
        <name>ATP</name>
        <dbReference type="ChEBI" id="CHEBI:30616"/>
    </ligand>
</feature>
<feature type="binding site" evidence="4">
    <location>
        <position position="786"/>
    </location>
    <ligand>
        <name>ATP</name>
        <dbReference type="ChEBI" id="CHEBI:30616"/>
    </ligand>
</feature>
<feature type="binding site" evidence="2">
    <location>
        <position position="804"/>
    </location>
    <ligand>
        <name>ATP</name>
        <dbReference type="ChEBI" id="CHEBI:30616"/>
    </ligand>
</feature>
<feature type="binding site" evidence="3">
    <location>
        <position position="839"/>
    </location>
    <ligand>
        <name>ATP</name>
        <dbReference type="ChEBI" id="CHEBI:30616"/>
    </ligand>
</feature>
<feature type="binding site" evidence="3">
    <location>
        <position position="840"/>
    </location>
    <ligand>
        <name>ATP</name>
        <dbReference type="ChEBI" id="CHEBI:30616"/>
    </ligand>
</feature>
<feature type="binding site" evidence="3">
    <location>
        <position position="919"/>
    </location>
    <ligand>
        <name>ATP</name>
        <dbReference type="ChEBI" id="CHEBI:30616"/>
    </ligand>
</feature>
<feature type="binding site" evidence="2">
    <location>
        <position position="920"/>
    </location>
    <ligand>
        <name>ATP</name>
        <dbReference type="ChEBI" id="CHEBI:30616"/>
    </ligand>
</feature>
<feature type="binding site" evidence="2">
    <location>
        <position position="921"/>
    </location>
    <ligand>
        <name>ATP</name>
        <dbReference type="ChEBI" id="CHEBI:30616"/>
    </ligand>
</feature>
<feature type="binding site" evidence="3">
    <location>
        <position position="1031"/>
    </location>
    <ligand>
        <name>ATP</name>
        <dbReference type="ChEBI" id="CHEBI:30616"/>
    </ligand>
</feature>
<feature type="binding site" evidence="3">
    <location>
        <position position="1037"/>
    </location>
    <ligand>
        <name>ATP</name>
        <dbReference type="ChEBI" id="CHEBI:30616"/>
    </ligand>
</feature>
<feature type="binding site" evidence="6">
    <location>
        <position position="1057"/>
    </location>
    <ligand>
        <name>Mg(2+)</name>
        <dbReference type="ChEBI" id="CHEBI:18420"/>
    </ligand>
</feature>
<feature type="binding site" evidence="6">
    <location>
        <position position="1060"/>
    </location>
    <ligand>
        <name>ATP</name>
        <dbReference type="ChEBI" id="CHEBI:30616"/>
    </ligand>
</feature>
<feature type="binding site" evidence="3">
    <location>
        <position position="1061"/>
    </location>
    <ligand>
        <name>ATP</name>
        <dbReference type="ChEBI" id="CHEBI:30616"/>
    </ligand>
</feature>
<feature type="binding site" evidence="5">
    <location>
        <position position="1061"/>
    </location>
    <ligand>
        <name>Mg(2+)</name>
        <dbReference type="ChEBI" id="CHEBI:18420"/>
    </ligand>
</feature>
<feature type="binding site" evidence="10 16">
    <location>
        <position position="1320"/>
    </location>
    <ligand>
        <name>a 1,2-diacyl-sn-glycero-3-phospho-L-serine</name>
        <dbReference type="ChEBI" id="CHEBI:57262"/>
    </ligand>
</feature>
<feature type="site" description="Involved in the release of the transported lipid into the cytosolic leaflet" evidence="1">
    <location>
        <position position="554"/>
    </location>
</feature>
<feature type="strand" evidence="18">
    <location>
        <begin position="86"/>
        <end position="89"/>
    </location>
</feature>
<feature type="turn" evidence="18">
    <location>
        <begin position="100"/>
        <end position="104"/>
    </location>
</feature>
<feature type="turn" evidence="18">
    <location>
        <begin position="120"/>
        <end position="122"/>
    </location>
</feature>
<feature type="helix" evidence="18">
    <location>
        <begin position="123"/>
        <end position="131"/>
    </location>
</feature>
<feature type="helix" evidence="18">
    <location>
        <begin position="136"/>
        <end position="146"/>
    </location>
</feature>
<feature type="strand" evidence="18">
    <location>
        <begin position="152"/>
        <end position="154"/>
    </location>
</feature>
<feature type="turn" evidence="19">
    <location>
        <begin position="159"/>
        <end position="162"/>
    </location>
</feature>
<feature type="helix" evidence="19">
    <location>
        <begin position="163"/>
        <end position="183"/>
    </location>
</feature>
<feature type="strand" evidence="19">
    <location>
        <begin position="193"/>
        <end position="197"/>
    </location>
</feature>
<feature type="strand" evidence="19">
    <location>
        <begin position="323"/>
        <end position="325"/>
    </location>
</feature>
<feature type="strand" evidence="19">
    <location>
        <begin position="327"/>
        <end position="330"/>
    </location>
</feature>
<feature type="helix" evidence="19">
    <location>
        <begin position="331"/>
        <end position="333"/>
    </location>
</feature>
<feature type="strand" evidence="19">
    <location>
        <begin position="339"/>
        <end position="341"/>
    </location>
</feature>
<feature type="strand" evidence="19">
    <location>
        <begin position="350"/>
        <end position="352"/>
    </location>
</feature>
<feature type="strand" evidence="19">
    <location>
        <begin position="354"/>
        <end position="359"/>
    </location>
</feature>
<feature type="helix" evidence="19">
    <location>
        <begin position="360"/>
        <end position="362"/>
    </location>
</feature>
<feature type="strand" evidence="19">
    <location>
        <begin position="363"/>
        <end position="367"/>
    </location>
</feature>
<feature type="turn" evidence="19">
    <location>
        <begin position="369"/>
        <end position="371"/>
    </location>
</feature>
<feature type="strand" evidence="19">
    <location>
        <begin position="378"/>
        <end position="381"/>
    </location>
</feature>
<feature type="turn" evidence="18">
    <location>
        <begin position="385"/>
        <end position="388"/>
    </location>
</feature>
<feature type="strand" evidence="19">
    <location>
        <begin position="391"/>
        <end position="393"/>
    </location>
</feature>
<feature type="turn" evidence="18">
    <location>
        <begin position="394"/>
        <end position="397"/>
    </location>
</feature>
<feature type="strand" evidence="18">
    <location>
        <begin position="400"/>
        <end position="403"/>
    </location>
</feature>
<feature type="strand" evidence="18">
    <location>
        <begin position="417"/>
        <end position="419"/>
    </location>
</feature>
<feature type="helix" evidence="18">
    <location>
        <begin position="441"/>
        <end position="443"/>
    </location>
</feature>
<feature type="strand" evidence="19">
    <location>
        <begin position="447"/>
        <end position="453"/>
    </location>
</feature>
<feature type="strand" evidence="19">
    <location>
        <begin position="457"/>
        <end position="460"/>
    </location>
</feature>
<feature type="helix" evidence="19">
    <location>
        <begin position="469"/>
        <end position="472"/>
    </location>
</feature>
<feature type="helix" evidence="19">
    <location>
        <begin position="484"/>
        <end position="487"/>
    </location>
</feature>
<feature type="helix" evidence="19">
    <location>
        <begin position="489"/>
        <end position="513"/>
    </location>
</feature>
<feature type="strand" evidence="19">
    <location>
        <begin position="517"/>
        <end position="519"/>
    </location>
</feature>
<feature type="helix" evidence="19">
    <location>
        <begin position="520"/>
        <end position="524"/>
    </location>
</feature>
<feature type="strand" evidence="19">
    <location>
        <begin position="529"/>
        <end position="531"/>
    </location>
</feature>
<feature type="helix" evidence="19">
    <location>
        <begin position="533"/>
        <end position="547"/>
    </location>
</feature>
<feature type="helix" evidence="19">
    <location>
        <begin position="548"/>
        <end position="551"/>
    </location>
</feature>
<feature type="helix" evidence="19">
    <location>
        <begin position="554"/>
        <end position="572"/>
    </location>
</feature>
<feature type="helix" evidence="18">
    <location>
        <begin position="575"/>
        <end position="577"/>
    </location>
</feature>
<feature type="turn" evidence="19">
    <location>
        <begin position="580"/>
        <end position="583"/>
    </location>
</feature>
<feature type="strand" evidence="18">
    <location>
        <begin position="587"/>
        <end position="589"/>
    </location>
</feature>
<feature type="helix" evidence="19">
    <location>
        <begin position="591"/>
        <end position="593"/>
    </location>
</feature>
<feature type="helix" evidence="19">
    <location>
        <begin position="596"/>
        <end position="599"/>
    </location>
</feature>
<feature type="strand" evidence="19">
    <location>
        <begin position="602"/>
        <end position="605"/>
    </location>
</feature>
<feature type="strand" evidence="19">
    <location>
        <begin position="607"/>
        <end position="623"/>
    </location>
</feature>
<feature type="strand" evidence="19">
    <location>
        <begin position="626"/>
        <end position="628"/>
    </location>
</feature>
<feature type="helix" evidence="19">
    <location>
        <begin position="634"/>
        <end position="641"/>
    </location>
</feature>
<feature type="strand" evidence="18">
    <location>
        <begin position="643"/>
        <end position="646"/>
    </location>
</feature>
<feature type="helix" evidence="19">
    <location>
        <begin position="649"/>
        <end position="670"/>
    </location>
</feature>
<feature type="helix" evidence="19">
    <location>
        <begin position="688"/>
        <end position="695"/>
    </location>
</feature>
<feature type="turn" evidence="19">
    <location>
        <begin position="696"/>
        <end position="698"/>
    </location>
</feature>
<feature type="helix" evidence="19">
    <location>
        <begin position="701"/>
        <end position="712"/>
    </location>
</feature>
<feature type="turn" evidence="19">
    <location>
        <begin position="713"/>
        <end position="715"/>
    </location>
</feature>
<feature type="strand" evidence="19">
    <location>
        <begin position="720"/>
        <end position="723"/>
    </location>
</feature>
<feature type="strand" evidence="19">
    <location>
        <begin position="726"/>
        <end position="728"/>
    </location>
</feature>
<feature type="strand" evidence="19">
    <location>
        <begin position="731"/>
        <end position="734"/>
    </location>
</feature>
<feature type="helix" evidence="19">
    <location>
        <begin position="740"/>
        <end position="747"/>
    </location>
</feature>
<feature type="helix" evidence="19">
    <location>
        <begin position="748"/>
        <end position="750"/>
    </location>
</feature>
<feature type="strand" evidence="19">
    <location>
        <begin position="754"/>
        <end position="757"/>
    </location>
</feature>
<feature type="strand" evidence="19">
    <location>
        <begin position="759"/>
        <end position="766"/>
    </location>
</feature>
<feature type="strand" evidence="19">
    <location>
        <begin position="769"/>
        <end position="772"/>
    </location>
</feature>
<feature type="strand" evidence="19">
    <location>
        <begin position="775"/>
        <end position="779"/>
    </location>
</feature>
<feature type="turn" evidence="19">
    <location>
        <begin position="783"/>
        <end position="785"/>
    </location>
</feature>
<feature type="strand" evidence="19">
    <location>
        <begin position="786"/>
        <end position="793"/>
    </location>
</feature>
<feature type="strand" evidence="19">
    <location>
        <begin position="799"/>
        <end position="805"/>
    </location>
</feature>
<feature type="helix" evidence="19">
    <location>
        <begin position="807"/>
        <end position="810"/>
    </location>
</feature>
<feature type="strand" evidence="18">
    <location>
        <begin position="816"/>
        <end position="818"/>
    </location>
</feature>
<feature type="helix" evidence="19">
    <location>
        <begin position="820"/>
        <end position="836"/>
    </location>
</feature>
<feature type="strand" evidence="19">
    <location>
        <begin position="842"/>
        <end position="847"/>
    </location>
</feature>
<feature type="helix" evidence="19">
    <location>
        <begin position="850"/>
        <end position="864"/>
    </location>
</feature>
<feature type="helix" evidence="19">
    <location>
        <begin position="870"/>
        <end position="877"/>
    </location>
</feature>
<feature type="helix" evidence="19">
    <location>
        <begin position="879"/>
        <end position="882"/>
    </location>
</feature>
<feature type="strand" evidence="19">
    <location>
        <begin position="886"/>
        <end position="897"/>
    </location>
</feature>
<feature type="helix" evidence="19">
    <location>
        <begin position="901"/>
        <end position="910"/>
    </location>
</feature>
<feature type="strand" evidence="19">
    <location>
        <begin position="914"/>
        <end position="917"/>
    </location>
</feature>
<feature type="helix" evidence="19">
    <location>
        <begin position="923"/>
        <end position="932"/>
    </location>
</feature>
<feature type="strand" evidence="19">
    <location>
        <begin position="943"/>
        <end position="945"/>
    </location>
</feature>
<feature type="helix" evidence="19">
    <location>
        <begin position="955"/>
        <end position="971"/>
    </location>
</feature>
<feature type="helix" evidence="19">
    <location>
        <begin position="979"/>
        <end position="985"/>
    </location>
</feature>
<feature type="strand" evidence="19">
    <location>
        <begin position="998"/>
        <end position="1001"/>
    </location>
</feature>
<feature type="helix" evidence="19">
    <location>
        <begin position="1004"/>
        <end position="1008"/>
    </location>
</feature>
<feature type="turn" evidence="19">
    <location>
        <begin position="1011"/>
        <end position="1013"/>
    </location>
</feature>
<feature type="helix" evidence="19">
    <location>
        <begin position="1014"/>
        <end position="1023"/>
    </location>
</feature>
<feature type="strand" evidence="19">
    <location>
        <begin position="1025"/>
        <end position="1030"/>
    </location>
</feature>
<feature type="helix" evidence="19">
    <location>
        <begin position="1034"/>
        <end position="1046"/>
    </location>
</feature>
<feature type="strand" evidence="19">
    <location>
        <begin position="1052"/>
        <end position="1056"/>
    </location>
</feature>
<feature type="helix" evidence="19">
    <location>
        <begin position="1059"/>
        <end position="1061"/>
    </location>
</feature>
<feature type="helix" evidence="19">
    <location>
        <begin position="1062"/>
        <end position="1066"/>
    </location>
</feature>
<feature type="strand" evidence="19">
    <location>
        <begin position="1067"/>
        <end position="1074"/>
    </location>
</feature>
<feature type="turn" evidence="19">
    <location>
        <begin position="1081"/>
        <end position="1085"/>
    </location>
</feature>
<feature type="strand" evidence="19">
    <location>
        <begin position="1086"/>
        <end position="1092"/>
    </location>
</feature>
<feature type="helix" evidence="19">
    <location>
        <begin position="1093"/>
        <end position="1095"/>
    </location>
</feature>
<feature type="helix" evidence="19">
    <location>
        <begin position="1096"/>
        <end position="1099"/>
    </location>
</feature>
<feature type="turn" evidence="19">
    <location>
        <begin position="1100"/>
        <end position="1102"/>
    </location>
</feature>
<feature type="helix" evidence="19">
    <location>
        <begin position="1103"/>
        <end position="1133"/>
    </location>
</feature>
<feature type="turn" evidence="19">
    <location>
        <begin position="1134"/>
        <end position="1138"/>
    </location>
</feature>
<feature type="helix" evidence="19">
    <location>
        <begin position="1147"/>
        <end position="1151"/>
    </location>
</feature>
<feature type="turn" evidence="19">
    <location>
        <begin position="1152"/>
        <end position="1156"/>
    </location>
</feature>
<feature type="helix" evidence="19">
    <location>
        <begin position="1159"/>
        <end position="1166"/>
    </location>
</feature>
<feature type="helix" evidence="19">
    <location>
        <begin position="1175"/>
        <end position="1178"/>
    </location>
</feature>
<feature type="helix" evidence="19">
    <location>
        <begin position="1180"/>
        <end position="1183"/>
    </location>
</feature>
<feature type="helix" evidence="19">
    <location>
        <begin position="1184"/>
        <end position="1187"/>
    </location>
</feature>
<feature type="helix" evidence="19">
    <location>
        <begin position="1194"/>
        <end position="1219"/>
    </location>
</feature>
<feature type="strand" evidence="18">
    <location>
        <begin position="1221"/>
        <end position="1223"/>
    </location>
</feature>
<feature type="strand" evidence="19">
    <location>
        <begin position="1226"/>
        <end position="1230"/>
    </location>
</feature>
<feature type="helix" evidence="19">
    <location>
        <begin position="1237"/>
        <end position="1256"/>
    </location>
</feature>
<feature type="strand" evidence="19">
    <location>
        <begin position="1259"/>
        <end position="1262"/>
    </location>
</feature>
<feature type="helix" evidence="19">
    <location>
        <begin position="1263"/>
        <end position="1284"/>
    </location>
</feature>
<feature type="turn" evidence="19">
    <location>
        <begin position="1287"/>
        <end position="1289"/>
    </location>
</feature>
<feature type="strand" evidence="19">
    <location>
        <begin position="1290"/>
        <end position="1294"/>
    </location>
</feature>
<feature type="helix" evidence="19">
    <location>
        <begin position="1295"/>
        <end position="1300"/>
    </location>
</feature>
<feature type="helix" evidence="19">
    <location>
        <begin position="1304"/>
        <end position="1330"/>
    </location>
</feature>
<feature type="helix" evidence="19">
    <location>
        <begin position="1334"/>
        <end position="1344"/>
    </location>
</feature>
<feature type="turn" evidence="19">
    <location>
        <begin position="1345"/>
        <end position="1347"/>
    </location>
</feature>
<feature type="helix" evidence="19">
    <location>
        <begin position="1348"/>
        <end position="1355"/>
    </location>
</feature>
<protein>
    <recommendedName>
        <fullName evidence="12">Phospholipid-transporting ATPase DNF1</fullName>
        <ecNumber evidence="13">7.6.2.1</ecNumber>
    </recommendedName>
    <alternativeName>
        <fullName evidence="11">CtDNF1</fullName>
    </alternativeName>
</protein>